<evidence type="ECO:0000305" key="1"/>
<organism>
    <name type="scientific">Neisseria meningitidis serogroup B (strain ATCC BAA-335 / MC58)</name>
    <dbReference type="NCBI Taxonomy" id="122586"/>
    <lineage>
        <taxon>Bacteria</taxon>
        <taxon>Pseudomonadati</taxon>
        <taxon>Pseudomonadota</taxon>
        <taxon>Betaproteobacteria</taxon>
        <taxon>Neisseriales</taxon>
        <taxon>Neisseriaceae</taxon>
        <taxon>Neisseria</taxon>
    </lineage>
</organism>
<name>NEUA_NEIMB</name>
<sequence length="228" mass="24892">MEKQNIAVILARQNSKGLPLKNLRKMNGISLLGHTINAAISSKCFDRIIVSTDGGLIAEEAKNFGVEVVLRPAELASDTASSISGVIHALETIGSNSGTVTLLQPTSPLRTGAHIREAFSLFDEKIKGSVVSACPMEHHPLKTLLQINNGEYAPMRHLSDLEQPRQQLPQAFRPNGAIYINDTASLIANNCFFIAPTKLYIMSHQDSIDIDTELDLQQAENILNHKES</sequence>
<proteinExistence type="evidence at protein level"/>
<feature type="chain" id="PRO_0000213205" description="N-acylneuraminate cytidylyltransferase">
    <location>
        <begin position="1"/>
        <end position="228"/>
    </location>
</feature>
<reference key="1">
    <citation type="journal article" date="1992" name="FEMS Microbiol. Lett.">
        <title>Sequence and functional analysis of the cloned Neisseria meningitidis CMP-NeuNAc synthetase.</title>
        <authorList>
            <person name="Edwards U."/>
            <person name="Frosch M."/>
        </authorList>
    </citation>
    <scope>NUCLEOTIDE SEQUENCE [GENOMIC DNA]</scope>
    <source>
        <strain>B1940 / Serogroup B</strain>
    </source>
</reference>
<reference key="2">
    <citation type="journal article" date="1994" name="Mol. Microbiol.">
        <title>Molecular analysis of the biosynthesis pathway of the alpha-2,8 polysialic acid capsule by Neisseria meningitidis serogroup B.</title>
        <authorList>
            <person name="Edwards U."/>
            <person name="Mueller A."/>
            <person name="Hammerschmidt S."/>
            <person name="Gerardy-Schahn R."/>
            <person name="Frosch M."/>
        </authorList>
    </citation>
    <scope>SEQUENCE REVISION</scope>
</reference>
<reference key="3">
    <citation type="journal article" date="1994" name="J. Bacteriol.">
        <title>Identification of a genetic locus involved in the biosynthesis of N-acetyl-D-mannosamine, a precursor of the (alpha 2--&gt;8)-linked polysialic acid capsule of serogroup B Neisseria meningitidis.</title>
        <authorList>
            <person name="Swartley J.S."/>
            <person name="Stephens D.S."/>
        </authorList>
    </citation>
    <scope>NUCLEOTIDE SEQUENCE [GENOMIC DNA]</scope>
    <source>
        <strain>NMB / Serogroup B</strain>
    </source>
</reference>
<reference key="4">
    <citation type="journal article" date="1994" name="J. Bacteriol.">
        <title>Molecular cloning and analysis of genes for sialic acid synthesis in Neisseria meningitidis group B and purification of the meningococcal CMP-NeuNAc synthetase enzyme.</title>
        <authorList>
            <person name="Ganguli S."/>
            <person name="Zapata G."/>
            <person name="Wallis T."/>
            <person name="Reid C."/>
            <person name="Boulnois G.J."/>
            <person name="Vann W.F."/>
            <person name="Roberts I.S."/>
        </authorList>
    </citation>
    <scope>NUCLEOTIDE SEQUENCE [GENOMIC DNA]</scope>
    <scope>PARTIAL PROTEIN SEQUENCE</scope>
    <source>
        <strain>NCTC 8249 / Serogroup B</strain>
    </source>
</reference>
<reference key="5">
    <citation type="journal article" date="2000" name="Science">
        <title>Complete genome sequence of Neisseria meningitidis serogroup B strain MC58.</title>
        <authorList>
            <person name="Tettelin H."/>
            <person name="Saunders N.J."/>
            <person name="Heidelberg J.F."/>
            <person name="Jeffries A.C."/>
            <person name="Nelson K.E."/>
            <person name="Eisen J.A."/>
            <person name="Ketchum K.A."/>
            <person name="Hood D.W."/>
            <person name="Peden J.F."/>
            <person name="Dodson R.J."/>
            <person name="Nelson W.C."/>
            <person name="Gwinn M.L."/>
            <person name="DeBoy R.T."/>
            <person name="Peterson J.D."/>
            <person name="Hickey E.K."/>
            <person name="Haft D.H."/>
            <person name="Salzberg S.L."/>
            <person name="White O."/>
            <person name="Fleischmann R.D."/>
            <person name="Dougherty B.A."/>
            <person name="Mason T.M."/>
            <person name="Ciecko A."/>
            <person name="Parksey D.S."/>
            <person name="Blair E."/>
            <person name="Cittone H."/>
            <person name="Clark E.B."/>
            <person name="Cotton M.D."/>
            <person name="Utterback T.R."/>
            <person name="Khouri H.M."/>
            <person name="Qin H."/>
            <person name="Vamathevan J.J."/>
            <person name="Gill J."/>
            <person name="Scarlato V."/>
            <person name="Masignani V."/>
            <person name="Pizza M."/>
            <person name="Grandi G."/>
            <person name="Sun L."/>
            <person name="Smith H.O."/>
            <person name="Fraser C.M."/>
            <person name="Moxon E.R."/>
            <person name="Rappuoli R."/>
            <person name="Venter J.C."/>
        </authorList>
    </citation>
    <scope>NUCLEOTIDE SEQUENCE [LARGE SCALE GENOMIC DNA]</scope>
    <source>
        <strain>ATCC BAA-335 / MC58</strain>
    </source>
</reference>
<gene>
    <name type="primary">neuA</name>
    <name type="synonym">siaB</name>
    <name type="synonym">synB</name>
    <name type="ordered locus">NMB0069</name>
</gene>
<keyword id="KW-0963">Cytoplasm</keyword>
<keyword id="KW-0903">Direct protein sequencing</keyword>
<keyword id="KW-0548">Nucleotidyltransferase</keyword>
<keyword id="KW-1185">Reference proteome</keyword>
<keyword id="KW-0808">Transferase</keyword>
<accession>P0A0Z7</accession>
<accession>Q57385</accession>
<protein>
    <recommendedName>
        <fullName>N-acylneuraminate cytidylyltransferase</fullName>
        <ecNumber>2.7.7.43</ecNumber>
    </recommendedName>
    <alternativeName>
        <fullName>CMP-N-acetylneuraminic acid synthase</fullName>
        <shortName>CMP-NeuNAc synthase</shortName>
    </alternativeName>
    <alternativeName>
        <fullName>CMP-sialic acid synthase</fullName>
    </alternativeName>
</protein>
<dbReference type="EC" id="2.7.7.43"/>
<dbReference type="EMBL" id="M95053">
    <property type="protein sequence ID" value="AAA20476.1"/>
    <property type="molecule type" value="Genomic_DNA"/>
</dbReference>
<dbReference type="EMBL" id="U04328">
    <property type="protein sequence ID" value="AAA17655.1"/>
    <property type="molecule type" value="Unassigned_DNA"/>
</dbReference>
<dbReference type="EMBL" id="X78068">
    <property type="protein sequence ID" value="CAA54983.1"/>
    <property type="molecule type" value="Genomic_DNA"/>
</dbReference>
<dbReference type="EMBL" id="AE002098">
    <property type="protein sequence ID" value="AAF40536.1"/>
    <property type="molecule type" value="Genomic_DNA"/>
</dbReference>
<dbReference type="PIR" id="B53384">
    <property type="entry name" value="B53384"/>
</dbReference>
<dbReference type="RefSeq" id="NP_273133.1">
    <property type="nucleotide sequence ID" value="NC_003112.2"/>
</dbReference>
<dbReference type="RefSeq" id="WP_002215295.1">
    <property type="nucleotide sequence ID" value="NC_003112.2"/>
</dbReference>
<dbReference type="SMR" id="P0A0Z7"/>
<dbReference type="STRING" id="122586.NMB0069"/>
<dbReference type="PaxDb" id="122586-NMB0069"/>
<dbReference type="KEGG" id="nme:NMB0069"/>
<dbReference type="PATRIC" id="fig|122586.8.peg.103"/>
<dbReference type="HOGENOM" id="CLU_042930_1_0_4"/>
<dbReference type="InParanoid" id="P0A0Z7"/>
<dbReference type="OrthoDB" id="9805604at2"/>
<dbReference type="Proteomes" id="UP000000425">
    <property type="component" value="Chromosome"/>
</dbReference>
<dbReference type="GO" id="GO:0005737">
    <property type="term" value="C:cytoplasm"/>
    <property type="evidence" value="ECO:0007669"/>
    <property type="project" value="UniProtKB-SubCell"/>
</dbReference>
<dbReference type="GO" id="GO:0008781">
    <property type="term" value="F:N-acylneuraminate cytidylyltransferase activity"/>
    <property type="evidence" value="ECO:0000318"/>
    <property type="project" value="GO_Central"/>
</dbReference>
<dbReference type="CDD" id="cd02513">
    <property type="entry name" value="CMP-NeuAc_Synthase"/>
    <property type="match status" value="1"/>
</dbReference>
<dbReference type="Gene3D" id="3.90.550.10">
    <property type="entry name" value="Spore Coat Polysaccharide Biosynthesis Protein SpsA, Chain A"/>
    <property type="match status" value="1"/>
</dbReference>
<dbReference type="InterPro" id="IPR050793">
    <property type="entry name" value="CMP-NeuNAc_synthase"/>
</dbReference>
<dbReference type="InterPro" id="IPR003329">
    <property type="entry name" value="Cytidylyl_trans"/>
</dbReference>
<dbReference type="InterPro" id="IPR029044">
    <property type="entry name" value="Nucleotide-diphossugar_trans"/>
</dbReference>
<dbReference type="PANTHER" id="PTHR21485">
    <property type="entry name" value="HAD SUPERFAMILY MEMBERS CMAS AND KDSC"/>
    <property type="match status" value="1"/>
</dbReference>
<dbReference type="PANTHER" id="PTHR21485:SF6">
    <property type="entry name" value="N-ACYLNEURAMINATE CYTIDYLYLTRANSFERASE-RELATED"/>
    <property type="match status" value="1"/>
</dbReference>
<dbReference type="Pfam" id="PF02348">
    <property type="entry name" value="CTP_transf_3"/>
    <property type="match status" value="1"/>
</dbReference>
<dbReference type="SUPFAM" id="SSF53448">
    <property type="entry name" value="Nucleotide-diphospho-sugar transferases"/>
    <property type="match status" value="1"/>
</dbReference>
<comment type="catalytic activity">
    <reaction>
        <text>an N-acylneuraminate + CTP = a CMP-N-acyl-beta-neuraminate + diphosphate</text>
        <dbReference type="Rhea" id="RHEA:11344"/>
        <dbReference type="ChEBI" id="CHEBI:33019"/>
        <dbReference type="ChEBI" id="CHEBI:37563"/>
        <dbReference type="ChEBI" id="CHEBI:60073"/>
        <dbReference type="ChEBI" id="CHEBI:68671"/>
        <dbReference type="EC" id="2.7.7.43"/>
    </reaction>
</comment>
<comment type="subcellular location">
    <subcellularLocation>
        <location>Cytoplasm</location>
    </subcellularLocation>
</comment>
<comment type="similarity">
    <text evidence="1">Belongs to the CMP-NeuNAc synthase family.</text>
</comment>